<feature type="chain" id="PRO_0000294870" description="Small ribosomal subunit protein uS11">
    <location>
        <begin position="1"/>
        <end position="127"/>
    </location>
</feature>
<organism>
    <name type="scientific">Streptococcus suis (strain 05ZYH33)</name>
    <dbReference type="NCBI Taxonomy" id="391295"/>
    <lineage>
        <taxon>Bacteria</taxon>
        <taxon>Bacillati</taxon>
        <taxon>Bacillota</taxon>
        <taxon>Bacilli</taxon>
        <taxon>Lactobacillales</taxon>
        <taxon>Streptococcaceae</taxon>
        <taxon>Streptococcus</taxon>
    </lineage>
</organism>
<keyword id="KW-0687">Ribonucleoprotein</keyword>
<keyword id="KW-0689">Ribosomal protein</keyword>
<keyword id="KW-0694">RNA-binding</keyword>
<keyword id="KW-0699">rRNA-binding</keyword>
<sequence>MAKPTRKRRVKKNIESGIAHIHATFNNTIVMITDVHGNAIAWSSAGALGFKGSRKSTPFAAQMASEAAAKSAQEHGLKTVEVTVKGPGSGRESAIRALAAAGLEVTAIRDVTPVPHNGARPPKRRRV</sequence>
<comment type="function">
    <text evidence="1">Located on the platform of the 30S subunit, it bridges several disparate RNA helices of the 16S rRNA. Forms part of the Shine-Dalgarno cleft in the 70S ribosome.</text>
</comment>
<comment type="subunit">
    <text evidence="1">Part of the 30S ribosomal subunit. Interacts with proteins S7 and S18. Binds to IF-3.</text>
</comment>
<comment type="similarity">
    <text evidence="1">Belongs to the universal ribosomal protein uS11 family.</text>
</comment>
<comment type="sequence caution" evidence="2">
    <conflict type="frameshift">
        <sequence resource="EMBL-CDS" id="ABP89066"/>
    </conflict>
</comment>
<accession>A4VSH7</accession>
<evidence type="ECO:0000255" key="1">
    <source>
        <dbReference type="HAMAP-Rule" id="MF_01310"/>
    </source>
</evidence>
<evidence type="ECO:0000305" key="2"/>
<gene>
    <name evidence="1" type="primary">rpsK</name>
    <name type="ordered locus">SSU05_0094</name>
</gene>
<proteinExistence type="inferred from homology"/>
<reference key="1">
    <citation type="journal article" date="2007" name="PLoS ONE">
        <title>A glimpse of streptococcal toxic shock syndrome from comparative genomics of S. suis 2 Chinese isolates.</title>
        <authorList>
            <person name="Chen C."/>
            <person name="Tang J."/>
            <person name="Dong W."/>
            <person name="Wang C."/>
            <person name="Feng Y."/>
            <person name="Wang J."/>
            <person name="Zheng F."/>
            <person name="Pan X."/>
            <person name="Liu D."/>
            <person name="Li M."/>
            <person name="Song Y."/>
            <person name="Zhu X."/>
            <person name="Sun H."/>
            <person name="Feng T."/>
            <person name="Guo Z."/>
            <person name="Ju A."/>
            <person name="Ge J."/>
            <person name="Dong Y."/>
            <person name="Sun W."/>
            <person name="Jiang Y."/>
            <person name="Wang J."/>
            <person name="Yan J."/>
            <person name="Yang H."/>
            <person name="Wang X."/>
            <person name="Gao G.F."/>
            <person name="Yang R."/>
            <person name="Wang J."/>
            <person name="Yu J."/>
        </authorList>
    </citation>
    <scope>NUCLEOTIDE SEQUENCE [LARGE SCALE GENOMIC DNA]</scope>
    <source>
        <strain>05ZYH33</strain>
    </source>
</reference>
<name>RS11_STRSY</name>
<dbReference type="EMBL" id="CP000407">
    <property type="protein sequence ID" value="ABP89066.1"/>
    <property type="status" value="ALT_FRAME"/>
    <property type="molecule type" value="Genomic_DNA"/>
</dbReference>
<dbReference type="SMR" id="A4VSH7"/>
<dbReference type="STRING" id="391295.SSU05_0094"/>
<dbReference type="KEGG" id="ssu:SSU05_0094"/>
<dbReference type="HOGENOM" id="CLU_072439_5_3_9"/>
<dbReference type="GO" id="GO:1990904">
    <property type="term" value="C:ribonucleoprotein complex"/>
    <property type="evidence" value="ECO:0007669"/>
    <property type="project" value="UniProtKB-KW"/>
</dbReference>
<dbReference type="GO" id="GO:0005840">
    <property type="term" value="C:ribosome"/>
    <property type="evidence" value="ECO:0007669"/>
    <property type="project" value="UniProtKB-KW"/>
</dbReference>
<dbReference type="GO" id="GO:0019843">
    <property type="term" value="F:rRNA binding"/>
    <property type="evidence" value="ECO:0007669"/>
    <property type="project" value="UniProtKB-UniRule"/>
</dbReference>
<dbReference type="GO" id="GO:0003735">
    <property type="term" value="F:structural constituent of ribosome"/>
    <property type="evidence" value="ECO:0007669"/>
    <property type="project" value="InterPro"/>
</dbReference>
<dbReference type="GO" id="GO:0006412">
    <property type="term" value="P:translation"/>
    <property type="evidence" value="ECO:0007669"/>
    <property type="project" value="UniProtKB-UniRule"/>
</dbReference>
<dbReference type="FunFam" id="3.30.420.80:FF:000001">
    <property type="entry name" value="30S ribosomal protein S11"/>
    <property type="match status" value="1"/>
</dbReference>
<dbReference type="Gene3D" id="3.30.420.80">
    <property type="entry name" value="Ribosomal protein S11"/>
    <property type="match status" value="1"/>
</dbReference>
<dbReference type="HAMAP" id="MF_01310">
    <property type="entry name" value="Ribosomal_uS11"/>
    <property type="match status" value="1"/>
</dbReference>
<dbReference type="InterPro" id="IPR001971">
    <property type="entry name" value="Ribosomal_uS11"/>
</dbReference>
<dbReference type="InterPro" id="IPR019981">
    <property type="entry name" value="Ribosomal_uS11_bac-type"/>
</dbReference>
<dbReference type="InterPro" id="IPR018102">
    <property type="entry name" value="Ribosomal_uS11_CS"/>
</dbReference>
<dbReference type="InterPro" id="IPR036967">
    <property type="entry name" value="Ribosomal_uS11_sf"/>
</dbReference>
<dbReference type="NCBIfam" id="NF003698">
    <property type="entry name" value="PRK05309.1"/>
    <property type="match status" value="1"/>
</dbReference>
<dbReference type="NCBIfam" id="TIGR03632">
    <property type="entry name" value="uS11_bact"/>
    <property type="match status" value="1"/>
</dbReference>
<dbReference type="PANTHER" id="PTHR11759">
    <property type="entry name" value="40S RIBOSOMAL PROTEIN S14/30S RIBOSOMAL PROTEIN S11"/>
    <property type="match status" value="1"/>
</dbReference>
<dbReference type="Pfam" id="PF00411">
    <property type="entry name" value="Ribosomal_S11"/>
    <property type="match status" value="1"/>
</dbReference>
<dbReference type="PIRSF" id="PIRSF002131">
    <property type="entry name" value="Ribosomal_S11"/>
    <property type="match status" value="1"/>
</dbReference>
<dbReference type="SUPFAM" id="SSF53137">
    <property type="entry name" value="Translational machinery components"/>
    <property type="match status" value="1"/>
</dbReference>
<dbReference type="PROSITE" id="PS00054">
    <property type="entry name" value="RIBOSOMAL_S11"/>
    <property type="match status" value="1"/>
</dbReference>
<protein>
    <recommendedName>
        <fullName evidence="1">Small ribosomal subunit protein uS11</fullName>
    </recommendedName>
    <alternativeName>
        <fullName evidence="2">30S ribosomal protein S11</fullName>
    </alternativeName>
</protein>